<feature type="chain" id="PRO_0000320552" description="Protein FAM184B">
    <location>
        <begin position="1"/>
        <end position="942"/>
    </location>
</feature>
<feature type="region of interest" description="Disordered" evidence="2">
    <location>
        <begin position="1"/>
        <end position="26"/>
    </location>
</feature>
<feature type="region of interest" description="Disordered" evidence="2">
    <location>
        <begin position="73"/>
        <end position="97"/>
    </location>
</feature>
<feature type="region of interest" description="Disordered" evidence="2">
    <location>
        <begin position="486"/>
        <end position="542"/>
    </location>
</feature>
<feature type="region of interest" description="Disordered" evidence="2">
    <location>
        <begin position="880"/>
        <end position="934"/>
    </location>
</feature>
<feature type="coiled-coil region" evidence="1">
    <location>
        <begin position="89"/>
        <end position="150"/>
    </location>
</feature>
<feature type="coiled-coil region" evidence="1">
    <location>
        <begin position="196"/>
        <end position="337"/>
    </location>
</feature>
<feature type="coiled-coil region" evidence="1">
    <location>
        <begin position="387"/>
        <end position="495"/>
    </location>
</feature>
<feature type="coiled-coil region" evidence="1">
    <location>
        <begin position="575"/>
        <end position="619"/>
    </location>
</feature>
<feature type="coiled-coil region" evidence="1">
    <location>
        <begin position="686"/>
        <end position="815"/>
    </location>
</feature>
<feature type="compositionally biased region" description="Basic and acidic residues" evidence="2">
    <location>
        <begin position="504"/>
        <end position="513"/>
    </location>
</feature>
<feature type="compositionally biased region" description="Acidic residues" evidence="2">
    <location>
        <begin position="514"/>
        <end position="526"/>
    </location>
</feature>
<feature type="compositionally biased region" description="Polar residues" evidence="2">
    <location>
        <begin position="885"/>
        <end position="900"/>
    </location>
</feature>
<feature type="splice variant" id="VSP_031654" description="In isoform 2." evidence="3">
    <original>AAECLNKDSTDSLQAHLLELQALEDNA</original>
    <variation>VDGQLWIEYISPFTKCNCASYRYPRKT</variation>
    <location>
        <begin position="570"/>
        <end position="596"/>
    </location>
</feature>
<feature type="splice variant" id="VSP_031655" description="In isoform 2." evidence="3">
    <location>
        <begin position="597"/>
        <end position="942"/>
    </location>
</feature>
<feature type="sequence conflict" description="In Ref. 3; AAH56379." evidence="4" ref="3">
    <original>D</original>
    <variation>Y</variation>
    <location>
        <position position="577"/>
    </location>
</feature>
<gene>
    <name type="primary">Fam184b</name>
    <name type="synonym">Kiaa1276</name>
    <name type="ORF">MNCb-2622</name>
</gene>
<proteinExistence type="evidence at transcript level"/>
<comment type="alternative products">
    <event type="alternative splicing"/>
    <isoform>
        <id>Q0KK56-1</id>
        <name>1</name>
        <sequence type="displayed"/>
    </isoform>
    <isoform>
        <id>Q0KK56-2</id>
        <name>2</name>
        <sequence type="described" ref="VSP_031654 VSP_031655"/>
    </isoform>
</comment>
<comment type="similarity">
    <text evidence="4">Belongs to the FAM184 family.</text>
</comment>
<organism>
    <name type="scientific">Mus musculus</name>
    <name type="common">Mouse</name>
    <dbReference type="NCBI Taxonomy" id="10090"/>
    <lineage>
        <taxon>Eukaryota</taxon>
        <taxon>Metazoa</taxon>
        <taxon>Chordata</taxon>
        <taxon>Craniata</taxon>
        <taxon>Vertebrata</taxon>
        <taxon>Euteleostomi</taxon>
        <taxon>Mammalia</taxon>
        <taxon>Eutheria</taxon>
        <taxon>Euarchontoglires</taxon>
        <taxon>Glires</taxon>
        <taxon>Rodentia</taxon>
        <taxon>Myomorpha</taxon>
        <taxon>Muroidea</taxon>
        <taxon>Muridae</taxon>
        <taxon>Murinae</taxon>
        <taxon>Mus</taxon>
        <taxon>Mus</taxon>
    </lineage>
</organism>
<reference key="1">
    <citation type="journal article" date="2006" name="FASEB J.">
        <title>A gene-targeting approach for functional characterization of KIAA genes encoding extremely large proteins.</title>
        <authorList>
            <person name="Nakayama M."/>
            <person name="Iida M."/>
            <person name="Koseki H."/>
            <person name="Ohara O."/>
        </authorList>
    </citation>
    <scope>NUCLEOTIDE SEQUENCE [MRNA] (ISOFORM 1)</scope>
    <scope>NUCLEOTIDE SEQUENCE [GENOMIC DNA] OF 50-458</scope>
    <source>
        <strain>BALB/cCrSlc</strain>
        <tissue>Brain</tissue>
    </source>
</reference>
<reference key="2">
    <citation type="submission" date="2000-04" db="EMBL/GenBank/DDBJ databases">
        <title>Isolation of full-length cDNA clones from mouse brain cDNA library made by oligo-capping method.</title>
        <authorList>
            <person name="Osada N."/>
            <person name="Kusuda J."/>
            <person name="Tanuma R."/>
            <person name="Ito A."/>
            <person name="Hirata M."/>
            <person name="Sugano S."/>
            <person name="Hashimoto K."/>
        </authorList>
    </citation>
    <scope>NUCLEOTIDE SEQUENCE [LARGE SCALE MRNA] (ISOFORM 2)</scope>
    <source>
        <strain>C57BL/6J</strain>
        <tissue>Brain</tissue>
    </source>
</reference>
<reference key="3">
    <citation type="journal article" date="2004" name="Genome Res.">
        <title>The status, quality, and expansion of the NIH full-length cDNA project: the Mammalian Gene Collection (MGC).</title>
        <authorList>
            <consortium name="The MGC Project Team"/>
        </authorList>
    </citation>
    <scope>NUCLEOTIDE SEQUENCE [LARGE SCALE MRNA] (ISOFORM 1)</scope>
    <source>
        <strain>C57BL/6J</strain>
        <tissue>Brain</tissue>
    </source>
</reference>
<reference key="4">
    <citation type="journal article" date="2002" name="DNA Res.">
        <title>Prediction of the coding sequences of mouse homologues of KIAA gene: I. The complete nucleotide sequences of 100 mouse KIAA-homologous cDNAs identified by screening of terminal sequences of cDNA clones randomly sampled from size-fractionated libraries.</title>
        <authorList>
            <person name="Okazaki N."/>
            <person name="Kikuno R."/>
            <person name="Ohara R."/>
            <person name="Inamoto S."/>
            <person name="Hara Y."/>
            <person name="Nagase T."/>
            <person name="Ohara O."/>
            <person name="Koga H."/>
        </authorList>
    </citation>
    <scope>NUCLEOTIDE SEQUENCE [LARGE SCALE MRNA] OF 71-942 (ISOFORM 1)</scope>
    <source>
        <tissue>Brain</tissue>
    </source>
</reference>
<dbReference type="EMBL" id="AB257856">
    <property type="protein sequence ID" value="BAF03199.1"/>
    <property type="molecule type" value="mRNA"/>
</dbReference>
<dbReference type="EMBL" id="AB257861">
    <property type="protein sequence ID" value="BAF03204.1"/>
    <property type="molecule type" value="Genomic_DNA"/>
</dbReference>
<dbReference type="EMBL" id="AB041544">
    <property type="protein sequence ID" value="BAA95029.1"/>
    <property type="molecule type" value="mRNA"/>
</dbReference>
<dbReference type="EMBL" id="BC056379">
    <property type="protein sequence ID" value="AAH56379.1"/>
    <property type="molecule type" value="mRNA"/>
</dbReference>
<dbReference type="EMBL" id="AB093291">
    <property type="protein sequence ID" value="BAD02840.1"/>
    <property type="molecule type" value="mRNA"/>
</dbReference>
<dbReference type="CCDS" id="CCDS19276.1">
    <molecule id="Q0KK56-1"/>
</dbReference>
<dbReference type="RefSeq" id="NP_067391.3">
    <molecule id="Q0KK56-1"/>
    <property type="nucleotide sequence ID" value="NM_021416.3"/>
</dbReference>
<dbReference type="SMR" id="Q0KK56"/>
<dbReference type="FunCoup" id="Q0KK56">
    <property type="interactions" value="8"/>
</dbReference>
<dbReference type="IntAct" id="Q0KK56">
    <property type="interactions" value="1"/>
</dbReference>
<dbReference type="STRING" id="10090.ENSMUSP00000016023"/>
<dbReference type="iPTMnet" id="Q0KK56"/>
<dbReference type="PhosphoSitePlus" id="Q0KK56"/>
<dbReference type="PaxDb" id="10090-ENSMUSP00000016023"/>
<dbReference type="ProteomicsDB" id="275982">
    <molecule id="Q0KK56-1"/>
</dbReference>
<dbReference type="ProteomicsDB" id="275983">
    <molecule id="Q0KK56-2"/>
</dbReference>
<dbReference type="Antibodypedia" id="23092">
    <property type="antibodies" value="23 antibodies from 8 providers"/>
</dbReference>
<dbReference type="Ensembl" id="ENSMUST00000016023.9">
    <molecule id="Q0KK56-1"/>
    <property type="protein sequence ID" value="ENSMUSP00000016023.8"/>
    <property type="gene ID" value="ENSMUSG00000015879.9"/>
</dbReference>
<dbReference type="GeneID" id="58227"/>
<dbReference type="KEGG" id="mmu:58227"/>
<dbReference type="UCSC" id="uc008xja.2">
    <molecule id="Q0KK56-1"/>
    <property type="organism name" value="mouse"/>
</dbReference>
<dbReference type="UCSC" id="uc008xjb.2">
    <molecule id="Q0KK56-2"/>
    <property type="organism name" value="mouse"/>
</dbReference>
<dbReference type="AGR" id="MGI:2442958"/>
<dbReference type="CTD" id="27146"/>
<dbReference type="MGI" id="MGI:2442958">
    <property type="gene designation" value="Fam184b"/>
</dbReference>
<dbReference type="VEuPathDB" id="HostDB:ENSMUSG00000015879"/>
<dbReference type="eggNOG" id="ENOG502RRRX">
    <property type="taxonomic scope" value="Eukaryota"/>
</dbReference>
<dbReference type="GeneTree" id="ENSGT00530000063669"/>
<dbReference type="HOGENOM" id="CLU_005374_0_0_1"/>
<dbReference type="InParanoid" id="Q0KK56"/>
<dbReference type="OMA" id="PQELDCQ"/>
<dbReference type="OrthoDB" id="75801at2759"/>
<dbReference type="PhylomeDB" id="Q0KK56"/>
<dbReference type="TreeFam" id="TF316006"/>
<dbReference type="BioGRID-ORCS" id="58227">
    <property type="hits" value="2 hits in 76 CRISPR screens"/>
</dbReference>
<dbReference type="PRO" id="PR:Q0KK56"/>
<dbReference type="Proteomes" id="UP000000589">
    <property type="component" value="Chromosome 5"/>
</dbReference>
<dbReference type="RNAct" id="Q0KK56">
    <property type="molecule type" value="protein"/>
</dbReference>
<dbReference type="Bgee" id="ENSMUSG00000015879">
    <property type="expression patterns" value="Expressed in telencephalon lateral wall and 97 other cell types or tissues"/>
</dbReference>
<dbReference type="InterPro" id="IPR039478">
    <property type="entry name" value="FAM184A/B_N"/>
</dbReference>
<dbReference type="PANTHER" id="PTHR18870:SF8">
    <property type="entry name" value="PROTEIN FAM184B"/>
    <property type="match status" value="1"/>
</dbReference>
<dbReference type="PANTHER" id="PTHR18870">
    <property type="entry name" value="PROTEIN TAG-278-RELATED"/>
    <property type="match status" value="1"/>
</dbReference>
<dbReference type="Pfam" id="PF15665">
    <property type="entry name" value="FAM184"/>
    <property type="match status" value="1"/>
</dbReference>
<evidence type="ECO:0000255" key="1"/>
<evidence type="ECO:0000256" key="2">
    <source>
        <dbReference type="SAM" id="MobiDB-lite"/>
    </source>
</evidence>
<evidence type="ECO:0000303" key="3">
    <source ref="2"/>
</evidence>
<evidence type="ECO:0000305" key="4"/>
<protein>
    <recommendedName>
        <fullName>Protein FAM184B</fullName>
    </recommendedName>
</protein>
<name>F184B_MOUSE</name>
<keyword id="KW-0025">Alternative splicing</keyword>
<keyword id="KW-0175">Coiled coil</keyword>
<keyword id="KW-1185">Reference proteome</keyword>
<accession>Q0KK56</accession>
<accession>Q0KK51</accession>
<accession>Q76KB4</accession>
<accession>Q7TNB6</accession>
<accession>Q9JJG2</accession>
<sequence length="942" mass="107601">MASALNSKIHPPGTCASSKADARGGSGWRMDCDPEMHVKMCKKIAQLTKVIYALNTRQDEVEVSVESIREAHQEDLQDTGAETRTRLPQEQSRTSEDAETLLKRIQTLENALELQKRLTQEALAESASCKLETKERELRVEAEHAERVLILSKEMLELKADYEKRLQLLTSHEGPQWGQLSQESPDATAESSQRPEMHQVLLEVERLRAENKQLSQDYARKAEELQATYERENEAIRQAMQQSVSEALWQWQEKESGLRKNFQVQESALQAQVRKLEGDLEHRGRKISDLKKYAQKLKERIQDLDVQLREARQENSELKSTARKLGEKLAIAKDRLMLQECHVTQKTDDMKTEDGVLGKRDDLEACSLHPQQEQGFPKLCHCRNGGSETQTKKEASGEMENMKQQYEEDLRKVRHQTEEEKQQLREQLGKRLEDLVKKHTMEMKSVCSTVEVERKKLKEVEAQLEEVKTKSEREIQQLQEEKAALSTKLQNSLLEDPCSRPKKPARDEGLEKLTDEEESSSDEEERTGESVKGKSDLQPPFESVMKEKAVEIGHRPEDWQSQRTKLQTQAAECLNKDSTDSLQAHLLELQALEDNARQELQEDCEQMQVQQSGLLESLRQELTEQRVACCEHQKALEMLQNEFRAVGPLGKWQATNQCPGDRRDHTFITEDMGVTGPPGSLPCAAEKGLLEENAQLQDTVLRLRAEVDQHLQEALQLREQHRLLEEDQKAQRAMEVEALRQEHRKEMQAMVADFSGAQARLQARLAALETELKESGEKAGKGTSRPEDLQLIGRLQTRLKEREDIIRQLTEERRFHYAAFPSAVSHRNRSFSFNPHPGYLTPSMKKKKMEEVPSRVVSVPNLASYAKNFLSGDLSSRINAPPITKSPSLDPSPSCSQPYKPTQLLDGKTASRTQDGEPAQPKEAPQKQGSPHQEWFTKYFSF</sequence>